<comment type="subcellular location">
    <subcellularLocation>
        <location evidence="1">Cell membrane</location>
        <topology evidence="1">Multi-pass membrane protein</topology>
    </subcellularLocation>
</comment>
<comment type="similarity">
    <text evidence="1">Belongs to the AAE transporter (TC 2.A.81) family. YidE subfamily.</text>
</comment>
<feature type="chain" id="PRO_1000063250" description="Putative transport protein Ent638_0015">
    <location>
        <begin position="1"/>
        <end position="553"/>
    </location>
</feature>
<feature type="transmembrane region" description="Helical" evidence="1">
    <location>
        <begin position="4"/>
        <end position="24"/>
    </location>
</feature>
<feature type="transmembrane region" description="Helical" evidence="1">
    <location>
        <begin position="28"/>
        <end position="48"/>
    </location>
</feature>
<feature type="transmembrane region" description="Helical" evidence="1">
    <location>
        <begin position="65"/>
        <end position="85"/>
    </location>
</feature>
<feature type="transmembrane region" description="Helical" evidence="1">
    <location>
        <begin position="95"/>
        <end position="115"/>
    </location>
</feature>
<feature type="transmembrane region" description="Helical" evidence="1">
    <location>
        <begin position="158"/>
        <end position="178"/>
    </location>
</feature>
<feature type="transmembrane region" description="Helical" evidence="1">
    <location>
        <begin position="371"/>
        <end position="391"/>
    </location>
</feature>
<feature type="transmembrane region" description="Helical" evidence="1">
    <location>
        <begin position="403"/>
        <end position="425"/>
    </location>
</feature>
<feature type="transmembrane region" description="Helical" evidence="1">
    <location>
        <begin position="439"/>
        <end position="459"/>
    </location>
</feature>
<feature type="transmembrane region" description="Helical" evidence="1">
    <location>
        <begin position="464"/>
        <end position="484"/>
    </location>
</feature>
<feature type="transmembrane region" description="Helical" evidence="1">
    <location>
        <begin position="493"/>
        <end position="513"/>
    </location>
</feature>
<feature type="transmembrane region" description="Helical" evidence="1">
    <location>
        <begin position="533"/>
        <end position="553"/>
    </location>
</feature>
<feature type="domain" description="RCK C-terminal 1" evidence="1">
    <location>
        <begin position="191"/>
        <end position="276"/>
    </location>
</feature>
<feature type="domain" description="RCK C-terminal 2" evidence="1">
    <location>
        <begin position="279"/>
        <end position="361"/>
    </location>
</feature>
<gene>
    <name type="ordered locus">Ent638_0015</name>
</gene>
<dbReference type="EMBL" id="CP000653">
    <property type="protein sequence ID" value="ABP58705.1"/>
    <property type="molecule type" value="Genomic_DNA"/>
</dbReference>
<dbReference type="RefSeq" id="WP_011915283.1">
    <property type="nucleotide sequence ID" value="NC_009436.1"/>
</dbReference>
<dbReference type="SMR" id="A4W4S5"/>
<dbReference type="STRING" id="399742.Ent638_0015"/>
<dbReference type="KEGG" id="ent:Ent638_0015"/>
<dbReference type="eggNOG" id="COG2985">
    <property type="taxonomic scope" value="Bacteria"/>
</dbReference>
<dbReference type="HOGENOM" id="CLU_035023_3_1_6"/>
<dbReference type="OrthoDB" id="5166626at2"/>
<dbReference type="Proteomes" id="UP000000230">
    <property type="component" value="Chromosome"/>
</dbReference>
<dbReference type="GO" id="GO:0005886">
    <property type="term" value="C:plasma membrane"/>
    <property type="evidence" value="ECO:0007669"/>
    <property type="project" value="UniProtKB-SubCell"/>
</dbReference>
<dbReference type="GO" id="GO:0008324">
    <property type="term" value="F:monoatomic cation transmembrane transporter activity"/>
    <property type="evidence" value="ECO:0007669"/>
    <property type="project" value="InterPro"/>
</dbReference>
<dbReference type="GO" id="GO:0006813">
    <property type="term" value="P:potassium ion transport"/>
    <property type="evidence" value="ECO:0007669"/>
    <property type="project" value="InterPro"/>
</dbReference>
<dbReference type="Gene3D" id="3.30.70.1450">
    <property type="entry name" value="Regulator of K+ conductance, C-terminal domain"/>
    <property type="match status" value="2"/>
</dbReference>
<dbReference type="HAMAP" id="MF_01016">
    <property type="entry name" value="YidE"/>
    <property type="match status" value="1"/>
</dbReference>
<dbReference type="InterPro" id="IPR050144">
    <property type="entry name" value="AAE_transporter"/>
</dbReference>
<dbReference type="InterPro" id="IPR006037">
    <property type="entry name" value="RCK_C"/>
</dbReference>
<dbReference type="InterPro" id="IPR036721">
    <property type="entry name" value="RCK_C_sf"/>
</dbReference>
<dbReference type="InterPro" id="IPR023018">
    <property type="entry name" value="Transpt_YidE_put"/>
</dbReference>
<dbReference type="InterPro" id="IPR006512">
    <property type="entry name" value="YidE_YbjL"/>
</dbReference>
<dbReference type="NCBIfam" id="NF003007">
    <property type="entry name" value="PRK03818.1"/>
    <property type="match status" value="1"/>
</dbReference>
<dbReference type="NCBIfam" id="TIGR01625">
    <property type="entry name" value="YidE_YbjL_dupl"/>
    <property type="match status" value="2"/>
</dbReference>
<dbReference type="PANTHER" id="PTHR30445">
    <property type="entry name" value="K(+)_H(+) ANTIPORTER SUBUNIT KHTT"/>
    <property type="match status" value="1"/>
</dbReference>
<dbReference type="PANTHER" id="PTHR30445:SF3">
    <property type="entry name" value="TRANSPORT PROTEIN YIDE-RELATED"/>
    <property type="match status" value="1"/>
</dbReference>
<dbReference type="Pfam" id="PF06826">
    <property type="entry name" value="Asp-Al_Ex"/>
    <property type="match status" value="2"/>
</dbReference>
<dbReference type="Pfam" id="PF02080">
    <property type="entry name" value="TrkA_C"/>
    <property type="match status" value="2"/>
</dbReference>
<dbReference type="SUPFAM" id="SSF116726">
    <property type="entry name" value="TrkA C-terminal domain-like"/>
    <property type="match status" value="2"/>
</dbReference>
<dbReference type="PROSITE" id="PS51202">
    <property type="entry name" value="RCK_C"/>
    <property type="match status" value="2"/>
</dbReference>
<organism>
    <name type="scientific">Enterobacter sp. (strain 638)</name>
    <dbReference type="NCBI Taxonomy" id="399742"/>
    <lineage>
        <taxon>Bacteria</taxon>
        <taxon>Pseudomonadati</taxon>
        <taxon>Pseudomonadota</taxon>
        <taxon>Gammaproteobacteria</taxon>
        <taxon>Enterobacterales</taxon>
        <taxon>Enterobacteriaceae</taxon>
        <taxon>Enterobacter</taxon>
    </lineage>
</organism>
<evidence type="ECO:0000255" key="1">
    <source>
        <dbReference type="HAMAP-Rule" id="MF_01016"/>
    </source>
</evidence>
<accession>A4W4S5</accession>
<name>Y015_ENT38</name>
<proteinExistence type="inferred from homology"/>
<sequence length="553" mass="58893">MSDIALTVSVLALVAVVGLWIGNIKIRGVGLGIGGVLFGGIFIGHFAEQLGITLSAEMLHFIQEFGLILFVYTIGIQVGPGFFASLRVSGLRLNLFALGIVVMGGVVTAILHKLFEIPLPVVLGIFSGAVTNTPALGAGQQILRDLGIAPDVVDQMGMSYAMAYPFGICGILLTMWLVRVLFRINVDDEAKKHESAITNGHALIKTINIRVENPNLSNMAIQDVPILNSISIICSRLKRGDMLMVPSPGTVIQIGDLLHLVGQPGDLHSAQLVIGQEVETSLSTRGTDMRVERVVVTNEQVLGKKIRDLQVKERYDVVISRLNRAGVELVASPDASLQFGDILNLVGRPSSIDAVADMVGNAQQKLQQVQMLPVFIGIGLGVLLGSIPLYVPGFPVALKLGLAGGPLIMALILGRIGCIGKLYWFMPPSANLALRELGIVLFLSVVGLKSGGDFIDTLAHGEGISWIGYGFFITAVPLLTIGILARIFTNMNYLTLCGMLAGSMTDPPALAFANNLHATSGAAALSYATVYPLVMFLRIITPQLLAVLFWGMG</sequence>
<keyword id="KW-1003">Cell membrane</keyword>
<keyword id="KW-0472">Membrane</keyword>
<keyword id="KW-0677">Repeat</keyword>
<keyword id="KW-0812">Transmembrane</keyword>
<keyword id="KW-1133">Transmembrane helix</keyword>
<keyword id="KW-0813">Transport</keyword>
<protein>
    <recommendedName>
        <fullName evidence="1">Putative transport protein Ent638_0015</fullName>
    </recommendedName>
</protein>
<reference key="1">
    <citation type="journal article" date="2010" name="PLoS Genet.">
        <title>Genome sequence of the plant growth promoting endophytic bacterium Enterobacter sp. 638.</title>
        <authorList>
            <person name="Taghavi S."/>
            <person name="van der Lelie D."/>
            <person name="Hoffman A."/>
            <person name="Zhang Y.B."/>
            <person name="Walla M.D."/>
            <person name="Vangronsveld J."/>
            <person name="Newman L."/>
            <person name="Monchy S."/>
        </authorList>
    </citation>
    <scope>NUCLEOTIDE SEQUENCE [LARGE SCALE GENOMIC DNA]</scope>
    <source>
        <strain>638</strain>
    </source>
</reference>